<protein>
    <recommendedName>
        <fullName evidence="1">Putative cysteine ligase BshC</fullName>
        <ecNumber evidence="1">6.-.-.-</ecNumber>
    </recommendedName>
</protein>
<feature type="chain" id="PRO_0000378214" description="Putative cysteine ligase BshC">
    <location>
        <begin position="1"/>
        <end position="538"/>
    </location>
</feature>
<feature type="coiled-coil region" evidence="1">
    <location>
        <begin position="460"/>
        <end position="485"/>
    </location>
</feature>
<evidence type="ECO:0000255" key="1">
    <source>
        <dbReference type="HAMAP-Rule" id="MF_01867"/>
    </source>
</evidence>
<accession>B9IVZ6</accession>
<dbReference type="EC" id="6.-.-.-" evidence="1"/>
<dbReference type="EMBL" id="CP000227">
    <property type="protein sequence ID" value="ACM14133.1"/>
    <property type="molecule type" value="Genomic_DNA"/>
</dbReference>
<dbReference type="SMR" id="B9IVZ6"/>
<dbReference type="KEGG" id="bcq:BCQ_3705"/>
<dbReference type="HOGENOM" id="CLU_022249_1_0_9"/>
<dbReference type="Proteomes" id="UP000000441">
    <property type="component" value="Chromosome"/>
</dbReference>
<dbReference type="GO" id="GO:0016874">
    <property type="term" value="F:ligase activity"/>
    <property type="evidence" value="ECO:0007669"/>
    <property type="project" value="UniProtKB-UniRule"/>
</dbReference>
<dbReference type="HAMAP" id="MF_01867">
    <property type="entry name" value="BshC"/>
    <property type="match status" value="1"/>
</dbReference>
<dbReference type="InterPro" id="IPR011199">
    <property type="entry name" value="Bacillithiol_biosynth_BshC"/>
</dbReference>
<dbReference type="InterPro" id="IPR055399">
    <property type="entry name" value="CC_BshC"/>
</dbReference>
<dbReference type="InterPro" id="IPR055398">
    <property type="entry name" value="Rossmann-like_BshC"/>
</dbReference>
<dbReference type="NCBIfam" id="TIGR03998">
    <property type="entry name" value="thiol_BshC"/>
    <property type="match status" value="1"/>
</dbReference>
<dbReference type="Pfam" id="PF24850">
    <property type="entry name" value="CC_BshC"/>
    <property type="match status" value="1"/>
</dbReference>
<dbReference type="Pfam" id="PF10079">
    <property type="entry name" value="Rossmann-like_BshC"/>
    <property type="match status" value="1"/>
</dbReference>
<dbReference type="PIRSF" id="PIRSF012535">
    <property type="entry name" value="UCP012535"/>
    <property type="match status" value="1"/>
</dbReference>
<gene>
    <name evidence="1" type="primary">bshC</name>
    <name type="ordered locus">BCQ_3705</name>
</gene>
<sequence length="538" mass="62931">MEIKEISVPQQGVVADYMNGEKEIQSCFDYMLTEDAFKQRVQDLREREFFRQDLVAHLLEYNTKLQAGEATIQNVKALEDEDTYVVIAGQQAGLLTGPLYTIHKIISVLQLAKEKEESLGVKVVPVFWIAGEDHDMDEINHTFVTKNKKIKKTIFHDRNPKKASASESELSLEDCRKWIEEIFKTYPETNFTKDVLRFIDDSLGKSNTYVDFFGHLIMKMFINSGLILVDSHHPELRKLEVPFFKQIVSKYKEVQEGLHNQQEVIKELGYKPIIETKSNAVHIFMEIDNERVLLEDNQGKFVGKDGTYSFSYEELIEEMERSPERFSNNVVTRPLMQEYVFPTLAFIGGPGELAYWSELQQVFHTIGFRMPPVVPRITITYIERDIATDLHDLQLQESDPFLNNVDKLRENWLSNQIEEPIDERFVEAKKEIIDIHKSLQQFVKKIDPGLSSFAGKNEFKINEQIELLERMLKRNIEKKHEVELNKFRRIQFAIRPLGAPQERVWNVCYYLNQFGLDFVDRVMEKPFSWNGKHHVIKL</sequence>
<organism>
    <name type="scientific">Bacillus cereus (strain Q1)</name>
    <dbReference type="NCBI Taxonomy" id="361100"/>
    <lineage>
        <taxon>Bacteria</taxon>
        <taxon>Bacillati</taxon>
        <taxon>Bacillota</taxon>
        <taxon>Bacilli</taxon>
        <taxon>Bacillales</taxon>
        <taxon>Bacillaceae</taxon>
        <taxon>Bacillus</taxon>
        <taxon>Bacillus cereus group</taxon>
    </lineage>
</organism>
<proteinExistence type="inferred from homology"/>
<comment type="function">
    <text evidence="1">Involved in bacillithiol (BSH) biosynthesis. May catalyze the last step of the pathway, the addition of cysteine to glucosamine malate (GlcN-Mal) to generate BSH.</text>
</comment>
<comment type="similarity">
    <text evidence="1">Belongs to the BshC family.</text>
</comment>
<keyword id="KW-0175">Coiled coil</keyword>
<keyword id="KW-0436">Ligase</keyword>
<reference key="1">
    <citation type="journal article" date="2009" name="J. Bacteriol.">
        <title>Complete genome sequence of the extremophilic Bacillus cereus strain Q1 with industrial applications.</title>
        <authorList>
            <person name="Xiong Z."/>
            <person name="Jiang Y."/>
            <person name="Qi D."/>
            <person name="Lu H."/>
            <person name="Yang F."/>
            <person name="Yang J."/>
            <person name="Chen L."/>
            <person name="Sun L."/>
            <person name="Xu X."/>
            <person name="Xue Y."/>
            <person name="Zhu Y."/>
            <person name="Jin Q."/>
        </authorList>
    </citation>
    <scope>NUCLEOTIDE SEQUENCE [LARGE SCALE GENOMIC DNA]</scope>
    <source>
        <strain>Q1</strain>
    </source>
</reference>
<name>BSHC_BACCQ</name>